<sequence length="169" mass="18343">MAESGSGTSGGSSSVGGVSNPASLAPGDSQLIALIVEQLKSRGQFDGFRRDCLADVDTKPAYQNLRQKVDNFVSTHLDKQEWNADMNKNQLRNGLRQSVIQSGMLEAGVDRIISQVVDPKLNHIFRPQIEKAIHEYLTAQTKEDSAPPLPPGPPEPQEQEPPEPSQSVS</sequence>
<name>BOD1_XENLA</name>
<reference key="1">
    <citation type="submission" date="2004-07" db="EMBL/GenBank/DDBJ databases">
        <authorList>
            <consortium name="NIH - Xenopus Gene Collection (XGC) project"/>
        </authorList>
    </citation>
    <scope>NUCLEOTIDE SEQUENCE [LARGE SCALE MRNA]</scope>
    <source>
        <tissue>Ovary</tissue>
    </source>
</reference>
<dbReference type="EMBL" id="BC076724">
    <property type="protein sequence ID" value="AAH76724.1"/>
    <property type="molecule type" value="mRNA"/>
</dbReference>
<dbReference type="RefSeq" id="NP_001086501.1">
    <property type="nucleotide sequence ID" value="NM_001093032.1"/>
</dbReference>
<dbReference type="SMR" id="Q6DFL2"/>
<dbReference type="DNASU" id="446336"/>
<dbReference type="GeneID" id="446336"/>
<dbReference type="KEGG" id="xla:446336"/>
<dbReference type="AGR" id="Xenbase:XB-GENE-6079024"/>
<dbReference type="CTD" id="446336"/>
<dbReference type="Xenbase" id="XB-GENE-6079024">
    <property type="gene designation" value="bod1.L"/>
</dbReference>
<dbReference type="OrthoDB" id="7605699at2759"/>
<dbReference type="Proteomes" id="UP000186698">
    <property type="component" value="Chromosome 4L"/>
</dbReference>
<dbReference type="Bgee" id="446336">
    <property type="expression patterns" value="Expressed in egg cell and 19 other cell types or tissues"/>
</dbReference>
<dbReference type="GO" id="GO:0005813">
    <property type="term" value="C:centrosome"/>
    <property type="evidence" value="ECO:0007669"/>
    <property type="project" value="UniProtKB-SubCell"/>
</dbReference>
<dbReference type="GO" id="GO:0005737">
    <property type="term" value="C:cytoplasm"/>
    <property type="evidence" value="ECO:0007669"/>
    <property type="project" value="UniProtKB-KW"/>
</dbReference>
<dbReference type="GO" id="GO:0000776">
    <property type="term" value="C:kinetochore"/>
    <property type="evidence" value="ECO:0007669"/>
    <property type="project" value="UniProtKB-KW"/>
</dbReference>
<dbReference type="GO" id="GO:0051301">
    <property type="term" value="P:cell division"/>
    <property type="evidence" value="ECO:0007669"/>
    <property type="project" value="UniProtKB-KW"/>
</dbReference>
<dbReference type="InterPro" id="IPR055264">
    <property type="entry name" value="BOD1/SHG1_dom"/>
</dbReference>
<dbReference type="InterPro" id="IPR043244">
    <property type="entry name" value="BOD1L1"/>
</dbReference>
<dbReference type="PANTHER" id="PTHR47391">
    <property type="entry name" value="BIORIENTATION OF CHROMOSOMES IN CELL DIVISION 1 LIKE 1"/>
    <property type="match status" value="1"/>
</dbReference>
<dbReference type="PANTHER" id="PTHR47391:SF1">
    <property type="entry name" value="BIORIENTATION OF CHROMOSOMES IN CELL DIVISION 1 LIKE 1"/>
    <property type="match status" value="1"/>
</dbReference>
<dbReference type="Pfam" id="PF05205">
    <property type="entry name" value="COMPASS-Shg1"/>
    <property type="match status" value="1"/>
</dbReference>
<comment type="function">
    <text evidence="1">Required for proper chromosome biorientation through the detection or correction of syntelic attachments in mitotic spindles.</text>
</comment>
<comment type="subcellular location">
    <subcellularLocation>
        <location evidence="1">Cytoplasm</location>
        <location evidence="1">Cytoskeleton</location>
        <location evidence="1">Microtubule organizing center</location>
        <location evidence="1">Centrosome</location>
    </subcellularLocation>
    <subcellularLocation>
        <location evidence="1">Chromosome</location>
        <location evidence="1">Centromere</location>
        <location evidence="1">Kinetochore</location>
    </subcellularLocation>
    <text evidence="1">Localizes at the centrosomes throughout the cell cycle, only dissociating during cytokinesis. Localizes at the kinetochore from prometaphase until anaphase.</text>
</comment>
<comment type="similarity">
    <text evidence="3">Belongs to the BOD1 family.</text>
</comment>
<feature type="chain" id="PRO_0000187031" description="Biorientation of chromosomes in cell division protein 1">
    <location>
        <begin position="1"/>
        <end position="169"/>
    </location>
</feature>
<feature type="region of interest" description="Disordered" evidence="2">
    <location>
        <begin position="1"/>
        <end position="22"/>
    </location>
</feature>
<feature type="region of interest" description="Disordered" evidence="2">
    <location>
        <begin position="137"/>
        <end position="169"/>
    </location>
</feature>
<feature type="compositionally biased region" description="Pro residues" evidence="2">
    <location>
        <begin position="147"/>
        <end position="156"/>
    </location>
</feature>
<keyword id="KW-0131">Cell cycle</keyword>
<keyword id="KW-0132">Cell division</keyword>
<keyword id="KW-0137">Centromere</keyword>
<keyword id="KW-0158">Chromosome</keyword>
<keyword id="KW-0963">Cytoplasm</keyword>
<keyword id="KW-0206">Cytoskeleton</keyword>
<keyword id="KW-0995">Kinetochore</keyword>
<keyword id="KW-0498">Mitosis</keyword>
<keyword id="KW-1185">Reference proteome</keyword>
<evidence type="ECO:0000250" key="1"/>
<evidence type="ECO:0000256" key="2">
    <source>
        <dbReference type="SAM" id="MobiDB-lite"/>
    </source>
</evidence>
<evidence type="ECO:0000305" key="3"/>
<gene>
    <name type="primary">bod1</name>
    <name type="synonym">fam44b</name>
</gene>
<organism>
    <name type="scientific">Xenopus laevis</name>
    <name type="common">African clawed frog</name>
    <dbReference type="NCBI Taxonomy" id="8355"/>
    <lineage>
        <taxon>Eukaryota</taxon>
        <taxon>Metazoa</taxon>
        <taxon>Chordata</taxon>
        <taxon>Craniata</taxon>
        <taxon>Vertebrata</taxon>
        <taxon>Euteleostomi</taxon>
        <taxon>Amphibia</taxon>
        <taxon>Batrachia</taxon>
        <taxon>Anura</taxon>
        <taxon>Pipoidea</taxon>
        <taxon>Pipidae</taxon>
        <taxon>Xenopodinae</taxon>
        <taxon>Xenopus</taxon>
        <taxon>Xenopus</taxon>
    </lineage>
</organism>
<accession>Q6DFL2</accession>
<protein>
    <recommendedName>
        <fullName>Biorientation of chromosomes in cell division protein 1</fullName>
    </recommendedName>
    <alternativeName>
        <fullName>Biorientation defective protein 1</fullName>
    </alternativeName>
    <alternativeName>
        <fullName>Protein FAM44B</fullName>
    </alternativeName>
</protein>
<proteinExistence type="evidence at transcript level"/>